<gene>
    <name type="primary">glnL</name>
    <name type="synonym">ntrB</name>
    <name type="ordered locus">STM4006</name>
</gene>
<protein>
    <recommendedName>
        <fullName evidence="2">Sensory histidine kinase/phosphatase NtrB</fullName>
        <ecNumber evidence="2">2.7.13.3</ecNumber>
        <ecNumber evidence="2">3.1.3.-</ecNumber>
    </recommendedName>
    <alternativeName>
        <fullName evidence="2">Nitrogen regulation protein NR(II)</fullName>
    </alternativeName>
    <alternativeName>
        <fullName evidence="2">Nitrogen regulator II</fullName>
        <shortName evidence="2">NRII</shortName>
    </alternativeName>
</protein>
<dbReference type="EC" id="2.7.13.3" evidence="2"/>
<dbReference type="EC" id="3.1.3.-" evidence="2"/>
<dbReference type="EMBL" id="X85104">
    <property type="protein sequence ID" value="CAA59424.1"/>
    <property type="molecule type" value="Genomic_DNA"/>
</dbReference>
<dbReference type="EMBL" id="AE006468">
    <property type="protein sequence ID" value="AAL22845.1"/>
    <property type="molecule type" value="Genomic_DNA"/>
</dbReference>
<dbReference type="PIR" id="S53023">
    <property type="entry name" value="S53023"/>
</dbReference>
<dbReference type="RefSeq" id="NP_462886.1">
    <property type="nucleotide sequence ID" value="NC_003197.2"/>
</dbReference>
<dbReference type="RefSeq" id="WP_000146194.1">
    <property type="nucleotide sequence ID" value="NC_003197.2"/>
</dbReference>
<dbReference type="SMR" id="P0A2D9"/>
<dbReference type="STRING" id="99287.STM4006"/>
<dbReference type="PaxDb" id="99287-STM4006"/>
<dbReference type="GeneID" id="1255532"/>
<dbReference type="KEGG" id="stm:STM4006"/>
<dbReference type="PATRIC" id="fig|99287.12.peg.4222"/>
<dbReference type="HOGENOM" id="CLU_000445_114_39_6"/>
<dbReference type="OMA" id="HGGRIDC"/>
<dbReference type="PhylomeDB" id="P0A2D9"/>
<dbReference type="BioCyc" id="SENT99287:STM4006-MONOMER"/>
<dbReference type="BRENDA" id="2.7.13.3">
    <property type="organism ID" value="5542"/>
</dbReference>
<dbReference type="Proteomes" id="UP000001014">
    <property type="component" value="Chromosome"/>
</dbReference>
<dbReference type="GO" id="GO:0005737">
    <property type="term" value="C:cytoplasm"/>
    <property type="evidence" value="ECO:0007669"/>
    <property type="project" value="UniProtKB-SubCell"/>
</dbReference>
<dbReference type="GO" id="GO:0005524">
    <property type="term" value="F:ATP binding"/>
    <property type="evidence" value="ECO:0007669"/>
    <property type="project" value="UniProtKB-KW"/>
</dbReference>
<dbReference type="GO" id="GO:0016787">
    <property type="term" value="F:hydrolase activity"/>
    <property type="evidence" value="ECO:0007669"/>
    <property type="project" value="UniProtKB-KW"/>
</dbReference>
<dbReference type="GO" id="GO:0000155">
    <property type="term" value="F:phosphorelay sensor kinase activity"/>
    <property type="evidence" value="ECO:0007669"/>
    <property type="project" value="InterPro"/>
</dbReference>
<dbReference type="GO" id="GO:0009399">
    <property type="term" value="P:nitrogen fixation"/>
    <property type="evidence" value="ECO:0007669"/>
    <property type="project" value="UniProtKB-KW"/>
</dbReference>
<dbReference type="GO" id="GO:0006355">
    <property type="term" value="P:regulation of DNA-templated transcription"/>
    <property type="evidence" value="ECO:0007669"/>
    <property type="project" value="InterPro"/>
</dbReference>
<dbReference type="CDD" id="cd16918">
    <property type="entry name" value="HATPase_Glnl-NtrB-like"/>
    <property type="match status" value="1"/>
</dbReference>
<dbReference type="CDD" id="cd00082">
    <property type="entry name" value="HisKA"/>
    <property type="match status" value="1"/>
</dbReference>
<dbReference type="CDD" id="cd00130">
    <property type="entry name" value="PAS"/>
    <property type="match status" value="1"/>
</dbReference>
<dbReference type="FunFam" id="1.10.287.130:FF:000005">
    <property type="entry name" value="Nitrogen regulation histidine kinase"/>
    <property type="match status" value="1"/>
</dbReference>
<dbReference type="FunFam" id="3.30.565.10:FF:000008">
    <property type="entry name" value="Nitrogen regulation histidine kinase"/>
    <property type="match status" value="1"/>
</dbReference>
<dbReference type="Gene3D" id="1.10.287.130">
    <property type="match status" value="1"/>
</dbReference>
<dbReference type="Gene3D" id="3.30.565.10">
    <property type="entry name" value="Histidine kinase-like ATPase, C-terminal domain"/>
    <property type="match status" value="1"/>
</dbReference>
<dbReference type="Gene3D" id="3.30.450.20">
    <property type="entry name" value="PAS domain"/>
    <property type="match status" value="1"/>
</dbReference>
<dbReference type="InterPro" id="IPR036890">
    <property type="entry name" value="HATPase_C_sf"/>
</dbReference>
<dbReference type="InterPro" id="IPR005467">
    <property type="entry name" value="His_kinase_dom"/>
</dbReference>
<dbReference type="InterPro" id="IPR003661">
    <property type="entry name" value="HisK_dim/P_dom"/>
</dbReference>
<dbReference type="InterPro" id="IPR036097">
    <property type="entry name" value="HisK_dim/P_sf"/>
</dbReference>
<dbReference type="InterPro" id="IPR000014">
    <property type="entry name" value="PAS"/>
</dbReference>
<dbReference type="InterPro" id="IPR035965">
    <property type="entry name" value="PAS-like_dom_sf"/>
</dbReference>
<dbReference type="InterPro" id="IPR013767">
    <property type="entry name" value="PAS_fold"/>
</dbReference>
<dbReference type="InterPro" id="IPR004358">
    <property type="entry name" value="Sig_transdc_His_kin-like_C"/>
</dbReference>
<dbReference type="NCBIfam" id="NF008293">
    <property type="entry name" value="PRK11073.1"/>
    <property type="match status" value="1"/>
</dbReference>
<dbReference type="PANTHER" id="PTHR43065">
    <property type="entry name" value="SENSOR HISTIDINE KINASE"/>
    <property type="match status" value="1"/>
</dbReference>
<dbReference type="PANTHER" id="PTHR43065:SF16">
    <property type="entry name" value="SENSORY HISTIDINE KINASE_PHOSPHATASE NTRB"/>
    <property type="match status" value="1"/>
</dbReference>
<dbReference type="Pfam" id="PF02518">
    <property type="entry name" value="HATPase_c"/>
    <property type="match status" value="1"/>
</dbReference>
<dbReference type="Pfam" id="PF00512">
    <property type="entry name" value="HisKA"/>
    <property type="match status" value="1"/>
</dbReference>
<dbReference type="Pfam" id="PF00989">
    <property type="entry name" value="PAS"/>
    <property type="match status" value="1"/>
</dbReference>
<dbReference type="PRINTS" id="PR00344">
    <property type="entry name" value="BCTRLSENSOR"/>
</dbReference>
<dbReference type="SMART" id="SM00387">
    <property type="entry name" value="HATPase_c"/>
    <property type="match status" value="1"/>
</dbReference>
<dbReference type="SMART" id="SM00388">
    <property type="entry name" value="HisKA"/>
    <property type="match status" value="1"/>
</dbReference>
<dbReference type="SMART" id="SM00091">
    <property type="entry name" value="PAS"/>
    <property type="match status" value="1"/>
</dbReference>
<dbReference type="SUPFAM" id="SSF55874">
    <property type="entry name" value="ATPase domain of HSP90 chaperone/DNA topoisomerase II/histidine kinase"/>
    <property type="match status" value="1"/>
</dbReference>
<dbReference type="SUPFAM" id="SSF47384">
    <property type="entry name" value="Homodimeric domain of signal transducing histidine kinase"/>
    <property type="match status" value="1"/>
</dbReference>
<dbReference type="SUPFAM" id="SSF55785">
    <property type="entry name" value="PYP-like sensor domain (PAS domain)"/>
    <property type="match status" value="1"/>
</dbReference>
<dbReference type="PROSITE" id="PS50109">
    <property type="entry name" value="HIS_KIN"/>
    <property type="match status" value="1"/>
</dbReference>
<comment type="function">
    <text evidence="2">Member of the two-component regulatory system NtrB/NtrC, which controls expression of the nitrogen-regulated (ntr) genes in response to nitrogen limitation. Under conditions of nitrogen limitation, NtrB autophosphorylates and transfers the phosphoryl group to NtrC. In the presence of nitrogen, acts as a phosphatase that dephosphorylates and inactivates NtrC.</text>
</comment>
<comment type="catalytic activity">
    <reaction evidence="2">
        <text>ATP + protein L-histidine = ADP + protein N-phospho-L-histidine.</text>
        <dbReference type="EC" id="2.7.13.3"/>
    </reaction>
</comment>
<comment type="subcellular location">
    <subcellularLocation>
        <location evidence="2">Cytoplasm</location>
    </subcellularLocation>
</comment>
<comment type="PTM">
    <text evidence="2">Autophosphorylated.</text>
</comment>
<keyword id="KW-0067">ATP-binding</keyword>
<keyword id="KW-0963">Cytoplasm</keyword>
<keyword id="KW-0378">Hydrolase</keyword>
<keyword id="KW-0418">Kinase</keyword>
<keyword id="KW-0535">Nitrogen fixation</keyword>
<keyword id="KW-0547">Nucleotide-binding</keyword>
<keyword id="KW-0597">Phosphoprotein</keyword>
<keyword id="KW-1185">Reference proteome</keyword>
<keyword id="KW-0808">Transferase</keyword>
<keyword id="KW-0902">Two-component regulatory system</keyword>
<feature type="chain" id="PRO_0000074823" description="Sensory histidine kinase/phosphatase NtrB">
    <location>
        <begin position="1"/>
        <end position="349"/>
    </location>
</feature>
<feature type="domain" description="PAS">
    <location>
        <begin position="5"/>
        <end position="78"/>
    </location>
</feature>
<feature type="domain" description="Histidine kinase" evidence="3">
    <location>
        <begin position="136"/>
        <end position="349"/>
    </location>
</feature>
<feature type="binding site" evidence="1">
    <location>
        <position position="329"/>
    </location>
    <ligand>
        <name>ATP</name>
        <dbReference type="ChEBI" id="CHEBI:30616"/>
    </ligand>
</feature>
<feature type="modified residue" description="Phosphohistidine; by autocatalysis" evidence="3">
    <location>
        <position position="139"/>
    </location>
</feature>
<feature type="sequence conflict" description="In Ref. 1; CAA59424." evidence="4" ref="1">
    <original>RL</original>
    <variation>SV</variation>
    <location>
        <begin position="177"/>
        <end position="178"/>
    </location>
</feature>
<feature type="sequence conflict" description="In Ref. 1; CAA59424." evidence="4" ref="1">
    <original>D</original>
    <variation>V</variation>
    <location>
        <position position="284"/>
    </location>
</feature>
<accession>P0A2D9</accession>
<accession>P41788</accession>
<organism>
    <name type="scientific">Salmonella typhimurium (strain LT2 / SGSC1412 / ATCC 700720)</name>
    <dbReference type="NCBI Taxonomy" id="99287"/>
    <lineage>
        <taxon>Bacteria</taxon>
        <taxon>Pseudomonadati</taxon>
        <taxon>Pseudomonadota</taxon>
        <taxon>Gammaproteobacteria</taxon>
        <taxon>Enterobacterales</taxon>
        <taxon>Enterobacteriaceae</taxon>
        <taxon>Salmonella</taxon>
    </lineage>
</organism>
<reference key="1">
    <citation type="submission" date="1995-03" db="EMBL/GenBank/DDBJ databases">
        <authorList>
            <person name="Kustu S.G."/>
        </authorList>
    </citation>
    <scope>NUCLEOTIDE SEQUENCE [GENOMIC DNA]</scope>
    <source>
        <strain>LT2</strain>
    </source>
</reference>
<reference key="2">
    <citation type="journal article" date="2001" name="Nature">
        <title>Complete genome sequence of Salmonella enterica serovar Typhimurium LT2.</title>
        <authorList>
            <person name="McClelland M."/>
            <person name="Sanderson K.E."/>
            <person name="Spieth J."/>
            <person name="Clifton S.W."/>
            <person name="Latreille P."/>
            <person name="Courtney L."/>
            <person name="Porwollik S."/>
            <person name="Ali J."/>
            <person name="Dante M."/>
            <person name="Du F."/>
            <person name="Hou S."/>
            <person name="Layman D."/>
            <person name="Leonard S."/>
            <person name="Nguyen C."/>
            <person name="Scott K."/>
            <person name="Holmes A."/>
            <person name="Grewal N."/>
            <person name="Mulvaney E."/>
            <person name="Ryan E."/>
            <person name="Sun H."/>
            <person name="Florea L."/>
            <person name="Miller W."/>
            <person name="Stoneking T."/>
            <person name="Nhan M."/>
            <person name="Waterston R."/>
            <person name="Wilson R.K."/>
        </authorList>
    </citation>
    <scope>NUCLEOTIDE SEQUENCE [LARGE SCALE GENOMIC DNA]</scope>
    <source>
        <strain>LT2 / SGSC1412 / ATCC 700720</strain>
    </source>
</reference>
<proteinExistence type="inferred from homology"/>
<sequence>MASGIQPDAGQILNSLINSVLVVDDALAIHYANPAAQQLLAQSSRKLFGTPLPELLSYFSLNIDLMRESLAAGQGFTDNEVTLVIDSRSHILSLTAQRLPDDFILLEMAPMDNQRRLSQEQLQHAQQIAARDLVRGLAHEIKNPLGGLRGAAQLLSKALPDPALTEYTKVIIEQADRLRNLVDRLLGPQHPGMHITESIHKVAERVVALVSMELPDNVRLIRDYDPSLPELPHDPEQIEQVLLNIVRNALQALGPEGGEITLRTRTAFQLTLHGERYRLAARIDVEDNGPGIPPHLQDTLFYPMVSGREGGTGLGLSIARNLIDQHAGKIEFTSWPGHTEFSVYLPIRK</sequence>
<evidence type="ECO:0000250" key="1"/>
<evidence type="ECO:0000250" key="2">
    <source>
        <dbReference type="UniProtKB" id="P0AFB5"/>
    </source>
</evidence>
<evidence type="ECO:0000255" key="3">
    <source>
        <dbReference type="PROSITE-ProRule" id="PRU00107"/>
    </source>
</evidence>
<evidence type="ECO:0000305" key="4"/>
<name>NTRB_SALTY</name>